<proteinExistence type="evidence at protein level"/>
<keyword id="KW-0002">3D-structure</keyword>
<keyword id="KW-0560">Oxidoreductase</keyword>
<keyword id="KW-0884">PQQ biosynthesis</keyword>
<dbReference type="EC" id="1.3.3.11" evidence="1"/>
<dbReference type="EMBL" id="CP000647">
    <property type="protein sequence ID" value="ABR77242.1"/>
    <property type="molecule type" value="Genomic_DNA"/>
</dbReference>
<dbReference type="RefSeq" id="WP_015958460.1">
    <property type="nucleotide sequence ID" value="NC_009648.1"/>
</dbReference>
<dbReference type="PDB" id="3HLX">
    <property type="method" value="X-ray"/>
    <property type="resolution" value="1.30 A"/>
    <property type="chains" value="A/D=1-251"/>
</dbReference>
<dbReference type="PDB" id="3HML">
    <property type="method" value="X-ray"/>
    <property type="resolution" value="2.35 A"/>
    <property type="chains" value="A/B=1-251"/>
</dbReference>
<dbReference type="PDB" id="3HNH">
    <property type="method" value="X-ray"/>
    <property type="resolution" value="1.80 A"/>
    <property type="chains" value="A=1-251"/>
</dbReference>
<dbReference type="PDB" id="4NY7">
    <property type="method" value="X-ray"/>
    <property type="resolution" value="1.44 A"/>
    <property type="chains" value="A/B=1-251"/>
</dbReference>
<dbReference type="PDBsum" id="3HLX"/>
<dbReference type="PDBsum" id="3HML"/>
<dbReference type="PDBsum" id="3HNH"/>
<dbReference type="PDBsum" id="4NY7"/>
<dbReference type="SMR" id="A6T9H1"/>
<dbReference type="STRING" id="272620.KPN_01811"/>
<dbReference type="PaxDb" id="272620-KPN_01811"/>
<dbReference type="EnsemblBacteria" id="ABR77242">
    <property type="protein sequence ID" value="ABR77242"/>
    <property type="gene ID" value="KPN_01811"/>
</dbReference>
<dbReference type="KEGG" id="kpn:KPN_01811"/>
<dbReference type="HOGENOM" id="CLU_080136_0_0_6"/>
<dbReference type="BRENDA" id="1.3.3.11">
    <property type="organism ID" value="2814"/>
</dbReference>
<dbReference type="UniPathway" id="UPA00539"/>
<dbReference type="EvolutionaryTrace" id="A6T9H1"/>
<dbReference type="Proteomes" id="UP000000265">
    <property type="component" value="Chromosome"/>
</dbReference>
<dbReference type="GO" id="GO:0033732">
    <property type="term" value="F:pyrroloquinoline-quinone synthase activity"/>
    <property type="evidence" value="ECO:0007669"/>
    <property type="project" value="UniProtKB-EC"/>
</dbReference>
<dbReference type="GO" id="GO:0018189">
    <property type="term" value="P:pyrroloquinoline quinone biosynthetic process"/>
    <property type="evidence" value="ECO:0007669"/>
    <property type="project" value="UniProtKB-UniRule"/>
</dbReference>
<dbReference type="GO" id="GO:0006790">
    <property type="term" value="P:sulfur compound metabolic process"/>
    <property type="evidence" value="ECO:0007669"/>
    <property type="project" value="UniProtKB-ARBA"/>
</dbReference>
<dbReference type="CDD" id="cd19370">
    <property type="entry name" value="TenA_PqqC"/>
    <property type="match status" value="1"/>
</dbReference>
<dbReference type="Gene3D" id="1.20.910.10">
    <property type="entry name" value="Heme oxygenase-like"/>
    <property type="match status" value="1"/>
</dbReference>
<dbReference type="HAMAP" id="MF_00654">
    <property type="entry name" value="PQQ_syn_PqqC"/>
    <property type="match status" value="1"/>
</dbReference>
<dbReference type="InterPro" id="IPR016084">
    <property type="entry name" value="Haem_Oase-like_multi-hlx"/>
</dbReference>
<dbReference type="InterPro" id="IPR011845">
    <property type="entry name" value="PqqC"/>
</dbReference>
<dbReference type="InterPro" id="IPR039068">
    <property type="entry name" value="PqqC-like"/>
</dbReference>
<dbReference type="InterPro" id="IPR004305">
    <property type="entry name" value="Thiaminase-2/PQQC"/>
</dbReference>
<dbReference type="NCBIfam" id="TIGR02111">
    <property type="entry name" value="PQQ_syn_pqqC"/>
    <property type="match status" value="1"/>
</dbReference>
<dbReference type="PANTHER" id="PTHR40279:SF3">
    <property type="entry name" value="4-AMINOBENZOATE SYNTHASE"/>
    <property type="match status" value="1"/>
</dbReference>
<dbReference type="PANTHER" id="PTHR40279">
    <property type="entry name" value="PQQC-LIKE PROTEIN"/>
    <property type="match status" value="1"/>
</dbReference>
<dbReference type="Pfam" id="PF03070">
    <property type="entry name" value="TENA_THI-4"/>
    <property type="match status" value="1"/>
</dbReference>
<dbReference type="SUPFAM" id="SSF48613">
    <property type="entry name" value="Heme oxygenase-like"/>
    <property type="match status" value="1"/>
</dbReference>
<comment type="function">
    <text evidence="1">Ring cyclization and eight-electron oxidation of 3a-(2-amino-2-carboxyethyl)-4,5-dioxo-4,5,6,7,8,9-hexahydroquinoline-7,9-dicarboxylic-acid to PQQ.</text>
</comment>
<comment type="catalytic activity">
    <reaction evidence="1">
        <text>6-(2-amino-2-carboxyethyl)-7,8-dioxo-1,2,3,4,7,8-hexahydroquinoline-2,4-dicarboxylate + 3 O2 = pyrroloquinoline quinone + 2 H2O2 + 2 H2O + H(+)</text>
        <dbReference type="Rhea" id="RHEA:10692"/>
        <dbReference type="ChEBI" id="CHEBI:15377"/>
        <dbReference type="ChEBI" id="CHEBI:15378"/>
        <dbReference type="ChEBI" id="CHEBI:15379"/>
        <dbReference type="ChEBI" id="CHEBI:16240"/>
        <dbReference type="ChEBI" id="CHEBI:58442"/>
        <dbReference type="ChEBI" id="CHEBI:58778"/>
        <dbReference type="EC" id="1.3.3.11"/>
    </reaction>
</comment>
<comment type="pathway">
    <text evidence="1">Cofactor biosynthesis; pyrroloquinoline quinone biosynthesis.</text>
</comment>
<comment type="similarity">
    <text evidence="1">Belongs to the PqqC family.</text>
</comment>
<organism>
    <name type="scientific">Klebsiella pneumoniae subsp. pneumoniae (strain ATCC 700721 / MGH 78578)</name>
    <dbReference type="NCBI Taxonomy" id="272620"/>
    <lineage>
        <taxon>Bacteria</taxon>
        <taxon>Pseudomonadati</taxon>
        <taxon>Pseudomonadota</taxon>
        <taxon>Gammaproteobacteria</taxon>
        <taxon>Enterobacterales</taxon>
        <taxon>Enterobacteriaceae</taxon>
        <taxon>Klebsiella/Raoultella group</taxon>
        <taxon>Klebsiella</taxon>
        <taxon>Klebsiella pneumoniae complex</taxon>
    </lineage>
</organism>
<protein>
    <recommendedName>
        <fullName evidence="1">Pyrroloquinoline-quinone synthase</fullName>
        <ecNumber evidence="1">1.3.3.11</ecNumber>
    </recommendedName>
    <alternativeName>
        <fullName evidence="1">Coenzyme PQQ synthesis protein C</fullName>
    </alternativeName>
    <alternativeName>
        <fullName evidence="1">Pyrroloquinoline quinone biosynthesis protein C</fullName>
    </alternativeName>
</protein>
<sequence length="251" mass="29030">MLITDTLSPQAFEEALRAKGDFYHIHHPYHIAMHNGNATREQIQGWVANRFYYQTTIPLKDAAIMANCPDAQTRRKWVQRILDHDGSHGEDGGIEAWLRLGEAVGLSRDDLLSERHVLPGVRFAVDAYLNFARRACWQEAACSSLTELFAPQIHQSRLDSWPQHYPWIKEEGYFYFRSRLSQANRDVEHGLALAKAYCDSAEKQNRMLEILQFKLDILWSMLDAMTMAYALQRPPYHTVTDKAAWHTTRLV</sequence>
<reference key="1">
    <citation type="submission" date="2006-09" db="EMBL/GenBank/DDBJ databases">
        <authorList>
            <consortium name="The Klebsiella pneumonia Genome Sequencing Project"/>
            <person name="McClelland M."/>
            <person name="Sanderson E.K."/>
            <person name="Spieth J."/>
            <person name="Clifton W.S."/>
            <person name="Latreille P."/>
            <person name="Sabo A."/>
            <person name="Pepin K."/>
            <person name="Bhonagiri V."/>
            <person name="Porwollik S."/>
            <person name="Ali J."/>
            <person name="Wilson R.K."/>
        </authorList>
    </citation>
    <scope>NUCLEOTIDE SEQUENCE [LARGE SCALE GENOMIC DNA]</scope>
    <source>
        <strain>ATCC 700721 / MGH 78578</strain>
    </source>
</reference>
<feature type="chain" id="PRO_1000061670" description="Pyrroloquinoline-quinone synthase">
    <location>
        <begin position="1"/>
        <end position="251"/>
    </location>
</feature>
<feature type="helix" evidence="2">
    <location>
        <begin position="9"/>
        <end position="18"/>
    </location>
</feature>
<feature type="helix" evidence="2">
    <location>
        <begin position="19"/>
        <end position="22"/>
    </location>
</feature>
<feature type="helix" evidence="2">
    <location>
        <begin position="24"/>
        <end position="26"/>
    </location>
</feature>
<feature type="helix" evidence="2">
    <location>
        <begin position="28"/>
        <end position="34"/>
    </location>
</feature>
<feature type="helix" evidence="2">
    <location>
        <begin position="40"/>
        <end position="66"/>
    </location>
</feature>
<feature type="helix" evidence="2">
    <location>
        <begin position="71"/>
        <end position="85"/>
    </location>
</feature>
<feature type="strand" evidence="2">
    <location>
        <begin position="87"/>
        <end position="90"/>
    </location>
</feature>
<feature type="helix" evidence="2">
    <location>
        <begin position="92"/>
        <end position="103"/>
    </location>
</feature>
<feature type="helix" evidence="2">
    <location>
        <begin position="108"/>
        <end position="112"/>
    </location>
</feature>
<feature type="turn" evidence="3">
    <location>
        <begin position="114"/>
        <end position="116"/>
    </location>
</feature>
<feature type="helix" evidence="2">
    <location>
        <begin position="119"/>
        <end position="134"/>
    </location>
</feature>
<feature type="helix" evidence="2">
    <location>
        <begin position="137"/>
        <end position="142"/>
    </location>
</feature>
<feature type="helix" evidence="2">
    <location>
        <begin position="143"/>
        <end position="148"/>
    </location>
</feature>
<feature type="helix" evidence="2">
    <location>
        <begin position="150"/>
        <end position="164"/>
    </location>
</feature>
<feature type="helix" evidence="2">
    <location>
        <begin position="170"/>
        <end position="173"/>
    </location>
</feature>
<feature type="helix" evidence="2">
    <location>
        <begin position="174"/>
        <end position="197"/>
    </location>
</feature>
<feature type="helix" evidence="2">
    <location>
        <begin position="201"/>
        <end position="229"/>
    </location>
</feature>
<feature type="turn" evidence="2">
    <location>
        <begin position="235"/>
        <end position="239"/>
    </location>
</feature>
<name>PQQC_KLEP7</name>
<accession>A6T9H1</accession>
<evidence type="ECO:0000255" key="1">
    <source>
        <dbReference type="HAMAP-Rule" id="MF_00654"/>
    </source>
</evidence>
<evidence type="ECO:0007829" key="2">
    <source>
        <dbReference type="PDB" id="3HLX"/>
    </source>
</evidence>
<evidence type="ECO:0007829" key="3">
    <source>
        <dbReference type="PDB" id="3HML"/>
    </source>
</evidence>
<gene>
    <name evidence="1" type="primary">pqqC</name>
    <name type="ordered locus">KPN78578_17810</name>
    <name type="ORF">KPN_01811</name>
</gene>